<accession>Q9Y5H8</accession>
<accession>O75286</accession>
<gene>
    <name type="primary">PCDHA3</name>
</gene>
<evidence type="ECO:0000250" key="1"/>
<evidence type="ECO:0000255" key="2"/>
<evidence type="ECO:0000255" key="3">
    <source>
        <dbReference type="PROSITE-ProRule" id="PRU00043"/>
    </source>
</evidence>
<evidence type="ECO:0000256" key="4">
    <source>
        <dbReference type="SAM" id="MobiDB-lite"/>
    </source>
</evidence>
<evidence type="ECO:0000303" key="5">
    <source>
    </source>
</evidence>
<comment type="function">
    <text>Potential calcium-dependent cell-adhesion protein. May be involved in the establishment and maintenance of specific neuronal connections in the brain.</text>
</comment>
<comment type="subcellular location">
    <subcellularLocation>
        <location evidence="1">Cell membrane</location>
        <topology evidence="1">Single-pass type I membrane protein</topology>
    </subcellularLocation>
</comment>
<comment type="alternative products">
    <event type="alternative splicing"/>
    <isoform>
        <id>Q9Y5H8-1</id>
        <name>1</name>
        <sequence type="displayed"/>
    </isoform>
    <isoform>
        <id>Q9Y5H8-2</id>
        <name>2</name>
        <sequence type="described" ref="VSP_000675 VSP_000676"/>
    </isoform>
</comment>
<dbReference type="EMBL" id="AF152311">
    <property type="protein sequence ID" value="AAD43705.1"/>
    <property type="molecule type" value="mRNA"/>
</dbReference>
<dbReference type="EMBL" id="AF152481">
    <property type="protein sequence ID" value="AAD43742.1"/>
    <property type="molecule type" value="mRNA"/>
</dbReference>
<dbReference type="EMBL" id="AC005609">
    <property type="protein sequence ID" value="AAC34323.1"/>
    <property type="molecule type" value="Genomic_DNA"/>
</dbReference>
<dbReference type="CCDS" id="CCDS54915.1">
    <molecule id="Q9Y5H8-1"/>
</dbReference>
<dbReference type="RefSeq" id="NP_061729.1">
    <molecule id="Q9Y5H8-1"/>
    <property type="nucleotide sequence ID" value="NM_018906.3"/>
</dbReference>
<dbReference type="RefSeq" id="NP_113685.1">
    <molecule id="Q9Y5H8-2"/>
    <property type="nucleotide sequence ID" value="NM_031497.2"/>
</dbReference>
<dbReference type="SMR" id="Q9Y5H8"/>
<dbReference type="BioGRID" id="121085">
    <property type="interactions" value="87"/>
</dbReference>
<dbReference type="FunCoup" id="Q9Y5H8">
    <property type="interactions" value="38"/>
</dbReference>
<dbReference type="IntAct" id="Q9Y5H8">
    <property type="interactions" value="33"/>
</dbReference>
<dbReference type="STRING" id="9606.ENSP00000429808"/>
<dbReference type="GlyCosmos" id="Q9Y5H8">
    <property type="glycosylation" value="3 sites, No reported glycans"/>
</dbReference>
<dbReference type="GlyGen" id="Q9Y5H8">
    <property type="glycosylation" value="4 sites, 1 O-linked glycan (1 site)"/>
</dbReference>
<dbReference type="iPTMnet" id="Q9Y5H8"/>
<dbReference type="PhosphoSitePlus" id="Q9Y5H8"/>
<dbReference type="BioMuta" id="PCDHA3"/>
<dbReference type="DMDM" id="13878429"/>
<dbReference type="jPOST" id="Q9Y5H8"/>
<dbReference type="MassIVE" id="Q9Y5H8"/>
<dbReference type="PaxDb" id="9606-ENSP00000429808"/>
<dbReference type="PeptideAtlas" id="Q9Y5H8"/>
<dbReference type="ProteomicsDB" id="86399">
    <molecule id="Q9Y5H8-1"/>
</dbReference>
<dbReference type="ProteomicsDB" id="86400">
    <molecule id="Q9Y5H8-2"/>
</dbReference>
<dbReference type="Antibodypedia" id="50294">
    <property type="antibodies" value="125 antibodies from 21 providers"/>
</dbReference>
<dbReference type="DNASU" id="56145"/>
<dbReference type="Ensembl" id="ENST00000522353.3">
    <molecule id="Q9Y5H8-1"/>
    <property type="protein sequence ID" value="ENSP00000429808.2"/>
    <property type="gene ID" value="ENSG00000255408.4"/>
</dbReference>
<dbReference type="Ensembl" id="ENST00000532566.3">
    <molecule id="Q9Y5H8-2"/>
    <property type="protein sequence ID" value="ENSP00000434086.2"/>
    <property type="gene ID" value="ENSG00000255408.4"/>
</dbReference>
<dbReference type="Ensembl" id="ENST00000708291.1">
    <molecule id="Q9Y5H8-2"/>
    <property type="protein sequence ID" value="ENSP00000517142.1"/>
    <property type="gene ID" value="ENSG00000291651.1"/>
</dbReference>
<dbReference type="Ensembl" id="ENST00000708292.1">
    <molecule id="Q9Y5H8-1"/>
    <property type="protein sequence ID" value="ENSP00000517143.1"/>
    <property type="gene ID" value="ENSG00000291651.1"/>
</dbReference>
<dbReference type="GeneID" id="56145"/>
<dbReference type="KEGG" id="hsa:56145"/>
<dbReference type="MANE-Select" id="ENST00000522353.3">
    <property type="protein sequence ID" value="ENSP00000429808.2"/>
    <property type="RefSeq nucleotide sequence ID" value="NM_018906.3"/>
    <property type="RefSeq protein sequence ID" value="NP_061729.1"/>
</dbReference>
<dbReference type="UCSC" id="uc003lhf.2">
    <molecule id="Q9Y5H8-1"/>
    <property type="organism name" value="human"/>
</dbReference>
<dbReference type="AGR" id="HGNC:8669"/>
<dbReference type="CTD" id="56145"/>
<dbReference type="DisGeNET" id="56145"/>
<dbReference type="GeneCards" id="PCDHA3"/>
<dbReference type="HGNC" id="HGNC:8669">
    <property type="gene designation" value="PCDHA3"/>
</dbReference>
<dbReference type="HPA" id="ENSG00000255408">
    <property type="expression patterns" value="Low tissue specificity"/>
</dbReference>
<dbReference type="MIM" id="604966">
    <property type="type" value="gene"/>
</dbReference>
<dbReference type="MIM" id="606309">
    <property type="type" value="gene"/>
</dbReference>
<dbReference type="neXtProt" id="NX_Q9Y5H8"/>
<dbReference type="OpenTargets" id="ENSG00000255408"/>
<dbReference type="PharmGKB" id="PA33015"/>
<dbReference type="VEuPathDB" id="HostDB:ENSG00000255408"/>
<dbReference type="eggNOG" id="KOG3594">
    <property type="taxonomic scope" value="Eukaryota"/>
</dbReference>
<dbReference type="GeneTree" id="ENSGT00940000164089"/>
<dbReference type="HOGENOM" id="CLU_006480_3_0_1"/>
<dbReference type="InParanoid" id="Q9Y5H8"/>
<dbReference type="OMA" id="INSEVRH"/>
<dbReference type="OrthoDB" id="6252479at2759"/>
<dbReference type="PAN-GO" id="Q9Y5H8">
    <property type="GO annotations" value="2 GO annotations based on evolutionary models"/>
</dbReference>
<dbReference type="PhylomeDB" id="Q9Y5H8"/>
<dbReference type="TreeFam" id="TF332299"/>
<dbReference type="PathwayCommons" id="Q9Y5H8"/>
<dbReference type="SignaLink" id="Q9Y5H8"/>
<dbReference type="SIGNOR" id="Q9Y5H8"/>
<dbReference type="BioGRID-ORCS" id="56145">
    <property type="hits" value="8 hits in 1098 CRISPR screens"/>
</dbReference>
<dbReference type="GeneWiki" id="PCDHA3"/>
<dbReference type="GenomeRNAi" id="56145"/>
<dbReference type="Pharos" id="Q9Y5H8">
    <property type="development level" value="Tdark"/>
</dbReference>
<dbReference type="PRO" id="PR:Q9Y5H8"/>
<dbReference type="Proteomes" id="UP000005640">
    <property type="component" value="Chromosome 5"/>
</dbReference>
<dbReference type="RNAct" id="Q9Y5H8">
    <property type="molecule type" value="protein"/>
</dbReference>
<dbReference type="Bgee" id="ENSG00000255408">
    <property type="expression patterns" value="Expressed in cortical plate and 88 other cell types or tissues"/>
</dbReference>
<dbReference type="GO" id="GO:0005886">
    <property type="term" value="C:plasma membrane"/>
    <property type="evidence" value="ECO:0000318"/>
    <property type="project" value="GO_Central"/>
</dbReference>
<dbReference type="GO" id="GO:0005509">
    <property type="term" value="F:calcium ion binding"/>
    <property type="evidence" value="ECO:0007669"/>
    <property type="project" value="InterPro"/>
</dbReference>
<dbReference type="GO" id="GO:0007155">
    <property type="term" value="P:cell adhesion"/>
    <property type="evidence" value="ECO:0000318"/>
    <property type="project" value="GO_Central"/>
</dbReference>
<dbReference type="GO" id="GO:0007156">
    <property type="term" value="P:homophilic cell adhesion via plasma membrane adhesion molecules"/>
    <property type="evidence" value="ECO:0007669"/>
    <property type="project" value="InterPro"/>
</dbReference>
<dbReference type="GO" id="GO:0007399">
    <property type="term" value="P:nervous system development"/>
    <property type="evidence" value="ECO:0000304"/>
    <property type="project" value="ProtInc"/>
</dbReference>
<dbReference type="CDD" id="cd11304">
    <property type="entry name" value="Cadherin_repeat"/>
    <property type="match status" value="6"/>
</dbReference>
<dbReference type="FunFam" id="2.60.40.60:FF:000001">
    <property type="entry name" value="Protocadherin alpha 2"/>
    <property type="match status" value="1"/>
</dbReference>
<dbReference type="FunFam" id="2.60.40.60:FF:000002">
    <property type="entry name" value="Protocadherin alpha 2"/>
    <property type="match status" value="1"/>
</dbReference>
<dbReference type="FunFam" id="2.60.40.60:FF:000003">
    <property type="entry name" value="Protocadherin alpha 2"/>
    <property type="match status" value="1"/>
</dbReference>
<dbReference type="FunFam" id="2.60.40.60:FF:000006">
    <property type="entry name" value="Protocadherin alpha 2"/>
    <property type="match status" value="1"/>
</dbReference>
<dbReference type="FunFam" id="2.60.40.60:FF:000007">
    <property type="entry name" value="Protocadherin alpha 2"/>
    <property type="match status" value="1"/>
</dbReference>
<dbReference type="FunFam" id="2.60.40.60:FF:000076">
    <property type="entry name" value="Protocadherin alpha 2"/>
    <property type="match status" value="1"/>
</dbReference>
<dbReference type="Gene3D" id="2.60.40.60">
    <property type="entry name" value="Cadherins"/>
    <property type="match status" value="6"/>
</dbReference>
<dbReference type="InterPro" id="IPR002126">
    <property type="entry name" value="Cadherin-like_dom"/>
</dbReference>
<dbReference type="InterPro" id="IPR015919">
    <property type="entry name" value="Cadherin-like_sf"/>
</dbReference>
<dbReference type="InterPro" id="IPR031904">
    <property type="entry name" value="Cadherin_CBD"/>
</dbReference>
<dbReference type="InterPro" id="IPR020894">
    <property type="entry name" value="Cadherin_CS"/>
</dbReference>
<dbReference type="InterPro" id="IPR013164">
    <property type="entry name" value="Cadherin_N"/>
</dbReference>
<dbReference type="InterPro" id="IPR050174">
    <property type="entry name" value="Protocadherin/Cadherin-CA"/>
</dbReference>
<dbReference type="PANTHER" id="PTHR24028">
    <property type="entry name" value="CADHERIN-87A"/>
    <property type="match status" value="1"/>
</dbReference>
<dbReference type="PANTHER" id="PTHR24028:SF327">
    <property type="entry name" value="PROTOCADHERIN ALPHA-3"/>
    <property type="match status" value="1"/>
</dbReference>
<dbReference type="Pfam" id="PF00028">
    <property type="entry name" value="Cadherin"/>
    <property type="match status" value="5"/>
</dbReference>
<dbReference type="Pfam" id="PF08266">
    <property type="entry name" value="Cadherin_2"/>
    <property type="match status" value="1"/>
</dbReference>
<dbReference type="Pfam" id="PF15974">
    <property type="entry name" value="Cadherin_tail"/>
    <property type="match status" value="1"/>
</dbReference>
<dbReference type="PRINTS" id="PR00205">
    <property type="entry name" value="CADHERIN"/>
</dbReference>
<dbReference type="SMART" id="SM00112">
    <property type="entry name" value="CA"/>
    <property type="match status" value="6"/>
</dbReference>
<dbReference type="SUPFAM" id="SSF49313">
    <property type="entry name" value="Cadherin-like"/>
    <property type="match status" value="6"/>
</dbReference>
<dbReference type="PROSITE" id="PS00232">
    <property type="entry name" value="CADHERIN_1"/>
    <property type="match status" value="5"/>
</dbReference>
<dbReference type="PROSITE" id="PS50268">
    <property type="entry name" value="CADHERIN_2"/>
    <property type="match status" value="6"/>
</dbReference>
<proteinExistence type="evidence at protein level"/>
<organism>
    <name type="scientific">Homo sapiens</name>
    <name type="common">Human</name>
    <dbReference type="NCBI Taxonomy" id="9606"/>
    <lineage>
        <taxon>Eukaryota</taxon>
        <taxon>Metazoa</taxon>
        <taxon>Chordata</taxon>
        <taxon>Craniata</taxon>
        <taxon>Vertebrata</taxon>
        <taxon>Euteleostomi</taxon>
        <taxon>Mammalia</taxon>
        <taxon>Eutheria</taxon>
        <taxon>Euarchontoglires</taxon>
        <taxon>Primates</taxon>
        <taxon>Haplorrhini</taxon>
        <taxon>Catarrhini</taxon>
        <taxon>Hominidae</taxon>
        <taxon>Homo</taxon>
    </lineage>
</organism>
<keyword id="KW-0025">Alternative splicing</keyword>
<keyword id="KW-0106">Calcium</keyword>
<keyword id="KW-0130">Cell adhesion</keyword>
<keyword id="KW-1003">Cell membrane</keyword>
<keyword id="KW-0325">Glycoprotein</keyword>
<keyword id="KW-0472">Membrane</keyword>
<keyword id="KW-1267">Proteomics identification</keyword>
<keyword id="KW-1185">Reference proteome</keyword>
<keyword id="KW-0677">Repeat</keyword>
<keyword id="KW-0732">Signal</keyword>
<keyword id="KW-0812">Transmembrane</keyword>
<keyword id="KW-1133">Transmembrane helix</keyword>
<protein>
    <recommendedName>
        <fullName>Protocadherin alpha-3</fullName>
        <shortName>PCDH-alpha-3</shortName>
    </recommendedName>
</protein>
<sequence>MLFSWREDPGAQCLLLSLLLLAASEVGSGQLHYSVSEEAKHGTFVGRIAQDLGLELAELVPRLFRVASKRHGDLLEVNLQNGILFVNSRIDREELCGRSAECSIHLEVIVDRPLQVFHVEVEVKDINDNAPVFPMAVKNLFISESRQPGSRFSLEGASDADIGTNSLLTYSLDSTEYFTLDVKRNDEEIKSLGLVLKKNLNREDTPKHYLLITAIDGGKPELTGTTQLKITVLDVNDNAPAFERTIYKVRLLENAPNGTLVVTVNATDLDEGVNKDIAYSFNTDMSADILSKFHLDPVNGQISVKGNIDFEESKSYEIQVEATDKGNPPMSDHCTVLLEIVDINDNVPELVIQSLSLPVLEDSPLSTVIALISVSDRDSGVNGQVTCSLTPHVPFKLVSTFKNYYSLVLDSPLDRESVSAYELVVTARDGGSPSLWATASVSVEVADVNDNAPAFSQSEYTVFVKENNPPGCHIFTVSARDADAQENALVSYSLVERRVGERALSSYVSVHAESGKVYALQPLDHEELELLQFQVSARDAGVPPLGSNVTLQVFVLDENDNAPALLMPRVGGIGGAVSELVPRSVGAGHVVAKVRAVDADSGYNAWLSYELQPGTGGARIPFRVGLYTGEISTTRALDEVDAPRHRLLVLVKDHGEPSLTATATVLVSLVESGQAPKASSQASAGATGPEAALVDVNVYLIVAICAVSSLLVLTLLLYTALRCSAPPTEGDCGPGKPTLVCSSAVGSWSYSQQRQQRVCSGEGLPKTDLMAFSPSLPPCPISRDREEKQDVDVDLSAKPRQPNPDWRYSASLRAGMHSSVHLEEAGILRAGPGGPDQQWPTVSSATPEPEAGEVSPPVGAGVNSNSWTFKYGPGNPKQSGPGELPDKFIIPGSPAIISIRQEPTNSQIDKSDFITFGKKEETKKKKKKKKGNKTQEKKEKGNSTTDNSDQ</sequence>
<name>PCDA3_HUMAN</name>
<reference key="1">
    <citation type="journal article" date="1999" name="Cell">
        <title>A striking organization of a large family of human neural cadherin-like cell adhesion genes.</title>
        <authorList>
            <person name="Wu Q."/>
            <person name="Maniatis T."/>
        </authorList>
    </citation>
    <scope>NUCLEOTIDE SEQUENCE [MRNA] (ISOFORMS 1 AND 2)</scope>
    <source>
        <tissue>Brain</tissue>
    </source>
</reference>
<reference key="2">
    <citation type="journal article" date="2004" name="Nature">
        <title>The DNA sequence and comparative analysis of human chromosome 5.</title>
        <authorList>
            <person name="Schmutz J."/>
            <person name="Martin J."/>
            <person name="Terry A."/>
            <person name="Couronne O."/>
            <person name="Grimwood J."/>
            <person name="Lowry S."/>
            <person name="Gordon L.A."/>
            <person name="Scott D."/>
            <person name="Xie G."/>
            <person name="Huang W."/>
            <person name="Hellsten U."/>
            <person name="Tran-Gyamfi M."/>
            <person name="She X."/>
            <person name="Prabhakar S."/>
            <person name="Aerts A."/>
            <person name="Altherr M."/>
            <person name="Bajorek E."/>
            <person name="Black S."/>
            <person name="Branscomb E."/>
            <person name="Caoile C."/>
            <person name="Challacombe J.F."/>
            <person name="Chan Y.M."/>
            <person name="Denys M."/>
            <person name="Detter J.C."/>
            <person name="Escobar J."/>
            <person name="Flowers D."/>
            <person name="Fotopulos D."/>
            <person name="Glavina T."/>
            <person name="Gomez M."/>
            <person name="Gonzales E."/>
            <person name="Goodstein D."/>
            <person name="Grigoriev I."/>
            <person name="Groza M."/>
            <person name="Hammon N."/>
            <person name="Hawkins T."/>
            <person name="Haydu L."/>
            <person name="Israni S."/>
            <person name="Jett J."/>
            <person name="Kadner K."/>
            <person name="Kimball H."/>
            <person name="Kobayashi A."/>
            <person name="Lopez F."/>
            <person name="Lou Y."/>
            <person name="Martinez D."/>
            <person name="Medina C."/>
            <person name="Morgan J."/>
            <person name="Nandkeshwar R."/>
            <person name="Noonan J.P."/>
            <person name="Pitluck S."/>
            <person name="Pollard M."/>
            <person name="Predki P."/>
            <person name="Priest J."/>
            <person name="Ramirez L."/>
            <person name="Retterer J."/>
            <person name="Rodriguez A."/>
            <person name="Rogers S."/>
            <person name="Salamov A."/>
            <person name="Salazar A."/>
            <person name="Thayer N."/>
            <person name="Tice H."/>
            <person name="Tsai M."/>
            <person name="Ustaszewska A."/>
            <person name="Vo N."/>
            <person name="Wheeler J."/>
            <person name="Wu K."/>
            <person name="Yang J."/>
            <person name="Dickson M."/>
            <person name="Cheng J.-F."/>
            <person name="Eichler E.E."/>
            <person name="Olsen A."/>
            <person name="Pennacchio L.A."/>
            <person name="Rokhsar D.S."/>
            <person name="Richardson P."/>
            <person name="Lucas S.M."/>
            <person name="Myers R.M."/>
            <person name="Rubin E.M."/>
        </authorList>
    </citation>
    <scope>NUCLEOTIDE SEQUENCE [LARGE SCALE GENOMIC DNA]</scope>
</reference>
<feature type="signal peptide" evidence="2">
    <location>
        <begin position="1"/>
        <end position="29"/>
    </location>
</feature>
<feature type="chain" id="PRO_0000003888" description="Protocadherin alpha-3">
    <location>
        <begin position="30"/>
        <end position="950"/>
    </location>
</feature>
<feature type="topological domain" description="Extracellular" evidence="2">
    <location>
        <begin position="30"/>
        <end position="697"/>
    </location>
</feature>
<feature type="transmembrane region" description="Helical" evidence="2">
    <location>
        <begin position="698"/>
        <end position="718"/>
    </location>
</feature>
<feature type="topological domain" description="Cytoplasmic" evidence="2">
    <location>
        <begin position="719"/>
        <end position="950"/>
    </location>
</feature>
<feature type="domain" description="Cadherin 1" evidence="3">
    <location>
        <begin position="30"/>
        <end position="133"/>
    </location>
</feature>
<feature type="domain" description="Cadherin 2" evidence="3">
    <location>
        <begin position="134"/>
        <end position="242"/>
    </location>
</feature>
<feature type="domain" description="Cadherin 3" evidence="3">
    <location>
        <begin position="243"/>
        <end position="350"/>
    </location>
</feature>
<feature type="domain" description="Cadherin 4" evidence="3">
    <location>
        <begin position="351"/>
        <end position="455"/>
    </location>
</feature>
<feature type="domain" description="Cadherin 5" evidence="3">
    <location>
        <begin position="456"/>
        <end position="565"/>
    </location>
</feature>
<feature type="domain" description="Cadherin 6" evidence="3">
    <location>
        <begin position="581"/>
        <end position="678"/>
    </location>
</feature>
<feature type="repeat" description="PXXP 1">
    <location>
        <begin position="734"/>
        <end position="737"/>
    </location>
</feature>
<feature type="repeat" description="PXXP 2">
    <location>
        <begin position="774"/>
        <end position="777"/>
    </location>
</feature>
<feature type="repeat" description="PXXP 3">
    <location>
        <begin position="799"/>
        <end position="802"/>
    </location>
</feature>
<feature type="repeat" description="PXXP 4">
    <location>
        <begin position="832"/>
        <end position="835"/>
    </location>
</feature>
<feature type="repeat" description="PXXP 5">
    <location>
        <begin position="873"/>
        <end position="876"/>
    </location>
</feature>
<feature type="repeat" description="PXXP 6">
    <location>
        <begin position="891"/>
        <end position="894"/>
    </location>
</feature>
<feature type="region of interest" description="6 X 4 AA repeats of P-X-X-P">
    <location>
        <begin position="734"/>
        <end position="894"/>
    </location>
</feature>
<feature type="region of interest" description="Disordered" evidence="4">
    <location>
        <begin position="777"/>
        <end position="806"/>
    </location>
</feature>
<feature type="region of interest" description="Disordered" evidence="4">
    <location>
        <begin position="831"/>
        <end position="856"/>
    </location>
</feature>
<feature type="region of interest" description="Disordered" evidence="4">
    <location>
        <begin position="869"/>
        <end position="950"/>
    </location>
</feature>
<feature type="compositionally biased region" description="Basic and acidic residues" evidence="4">
    <location>
        <begin position="782"/>
        <end position="797"/>
    </location>
</feature>
<feature type="compositionally biased region" description="Basic and acidic residues" evidence="4">
    <location>
        <begin position="909"/>
        <end position="923"/>
    </location>
</feature>
<feature type="glycosylation site" description="N-linked (GlcNAc...) asparagine" evidence="2">
    <location>
        <position position="257"/>
    </location>
</feature>
<feature type="glycosylation site" description="N-linked (GlcNAc...) asparagine" evidence="2">
    <location>
        <position position="265"/>
    </location>
</feature>
<feature type="glycosylation site" description="N-linked (GlcNAc...) asparagine" evidence="2">
    <location>
        <position position="548"/>
    </location>
</feature>
<feature type="splice variant" id="VSP_000675" description="In isoform 2." evidence="5">
    <original>PRQPNPDWRYSASLRAGMHSSVHLEE</original>
    <variation>VSNFYLFFPKCLCFSFLNVSTPLEIH</variation>
    <location>
        <begin position="799"/>
        <end position="824"/>
    </location>
</feature>
<feature type="splice variant" id="VSP_000676" description="In isoform 2." evidence="5">
    <location>
        <begin position="825"/>
        <end position="950"/>
    </location>
</feature>
<feature type="sequence variant" id="VAR_061060" description="In dbSNP:rs7731327.">
    <original>P</original>
    <variation>Q</variation>
    <location>
        <position position="61"/>
    </location>
</feature>
<feature type="sequence variant" id="VAR_048524" description="In dbSNP:rs3733709.">
    <original>I</original>
    <variation>T</variation>
    <location>
        <position position="289"/>
    </location>
</feature>
<feature type="sequence variant" id="VAR_021874" description="In dbSNP:rs3733708.">
    <original>I</original>
    <variation>V</variation>
    <location>
        <position position="318"/>
    </location>
</feature>
<feature type="sequence variant" id="VAR_048525" description="In dbSNP:rs7701755.">
    <original>S</original>
    <variation>I</variation>
    <location>
        <position position="440"/>
    </location>
</feature>
<feature type="sequence variant" id="VAR_021875" description="In dbSNP:rs2240694.">
    <original>C</original>
    <variation>Y</variation>
    <location>
        <position position="759"/>
    </location>
</feature>